<evidence type="ECO:0000250" key="1">
    <source>
        <dbReference type="UniProtKB" id="P00549"/>
    </source>
</evidence>
<evidence type="ECO:0000250" key="2">
    <source>
        <dbReference type="UniProtKB" id="P14618"/>
    </source>
</evidence>
<evidence type="ECO:0000250" key="3">
    <source>
        <dbReference type="UniProtKB" id="P30613"/>
    </source>
</evidence>
<evidence type="ECO:0000269" key="4">
    <source>
    </source>
</evidence>
<evidence type="ECO:0000305" key="5"/>
<proteinExistence type="evidence at transcript level"/>
<accession>Q92122</accession>
<accession>Q68FC1</accession>
<reference key="1">
    <citation type="journal article" date="1994" name="FEBS Lett.">
        <title>Tissue-dependent developmental expression of a cytosolic thyroid hormone protein gene in Xenopus: its role in the regulation of amphibian metamorphosis.</title>
        <authorList>
            <person name="Shi Y.-B."/>
            <person name="Liang V.C.-T."/>
            <person name="Parkison C."/>
            <person name="Cheng S.-Y."/>
        </authorList>
    </citation>
    <scope>NUCLEOTIDE SEQUENCE [MRNA]</scope>
    <source>
        <tissue>Intestine</tissue>
    </source>
</reference>
<reference key="2">
    <citation type="submission" date="2004-08" db="EMBL/GenBank/DDBJ databases">
        <authorList>
            <consortium name="NIH - Xenopus Gene Collection (XGC) project"/>
        </authorList>
    </citation>
    <scope>NUCLEOTIDE SEQUENCE [LARGE SCALE MRNA]</scope>
    <source>
        <tissue>Heart</tissue>
    </source>
</reference>
<gene>
    <name type="primary">pkm</name>
</gene>
<organism>
    <name type="scientific">Xenopus laevis</name>
    <name type="common">African clawed frog</name>
    <dbReference type="NCBI Taxonomy" id="8355"/>
    <lineage>
        <taxon>Eukaryota</taxon>
        <taxon>Metazoa</taxon>
        <taxon>Chordata</taxon>
        <taxon>Craniata</taxon>
        <taxon>Vertebrata</taxon>
        <taxon>Euteleostomi</taxon>
        <taxon>Amphibia</taxon>
        <taxon>Batrachia</taxon>
        <taxon>Anura</taxon>
        <taxon>Pipoidea</taxon>
        <taxon>Pipidae</taxon>
        <taxon>Xenopodinae</taxon>
        <taxon>Xenopus</taxon>
        <taxon>Xenopus</taxon>
    </lineage>
</organism>
<name>KPYM_XENLA</name>
<sequence>MSEAGSAFIQTQQLHAAMADTFLEHMCRLDIDSEPIVARNTGIICTIGPASRSVEMLKEMIKSGMNIARLNFSHGTHEYHAGTIKNVREATESLASNPIHYRPVAVALDTKGPEIRTGLIKGSGTAEVELKKGATMRITLDDAFQENCDENVLWVDYKNLTKVVKPGSKIYVDDGLISLLVKEIGPDFCVTEIENGGMLGSKKGVNLPGAAVDLPAVSSKDIQDLQFGVEQDVDMVFASFIRKAADVHEVREVLGEKGKNIKIISKIENHEGVRRFDEILEASDGIMVARGDLGIEIPAEKVFLAQKMMIGRCNRAGKPVICATQMLESMIKKPRPTRAEGSDVANAVLDGADCIMLSGETAKGDYPLEAVRMQHAIAREAEAAIFHRQLFEELRRVSPLTRDPTEATAVGAVEASFKCSSGAIIVLTKSGRSAHLLSRYRPRAPIISVTRNGQTARQAHLYRGIFPVLYREAVHEAWAEDVDSRVNFAMDIGKARGFFKSGDVVIVLTGWRPGSGFTNTMRVVPVP</sequence>
<comment type="function">
    <text evidence="2">Glycolytic enzyme that catalyzes the transfer of a phosphoryl group from phosphoenolpyruvate (PEP) to ADP, generating ATP.</text>
</comment>
<comment type="catalytic activity">
    <reaction evidence="2">
        <text>pyruvate + ATP = phosphoenolpyruvate + ADP + H(+)</text>
        <dbReference type="Rhea" id="RHEA:18157"/>
        <dbReference type="ChEBI" id="CHEBI:15361"/>
        <dbReference type="ChEBI" id="CHEBI:15378"/>
        <dbReference type="ChEBI" id="CHEBI:30616"/>
        <dbReference type="ChEBI" id="CHEBI:58702"/>
        <dbReference type="ChEBI" id="CHEBI:456216"/>
        <dbReference type="EC" id="2.7.1.40"/>
    </reaction>
</comment>
<comment type="cofactor">
    <cofactor evidence="2">
        <name>Mg(2+)</name>
        <dbReference type="ChEBI" id="CHEBI:18420"/>
    </cofactor>
</comment>
<comment type="cofactor">
    <cofactor evidence="2">
        <name>K(+)</name>
        <dbReference type="ChEBI" id="CHEBI:29103"/>
    </cofactor>
</comment>
<comment type="pathway">
    <text>Carbohydrate degradation; glycolysis; pyruvate from D-glyceraldehyde 3-phosphate: step 5/5.</text>
</comment>
<comment type="subunit">
    <text evidence="2">Homotetramer.</text>
</comment>
<comment type="developmental stage">
    <text evidence="4">Expressed in all stages of tadpole development. In the tail, high levels found in the premetamorphic stage (levels 54-60). Levels decrease with tail resorption. In the hindlimb, low expression during limb morphogenesis (stages 54-56), increased levels with limb growth (stages 58-66). Levels increase only slightly during intestine remodeling.</text>
</comment>
<comment type="similarity">
    <text evidence="5">Belongs to the pyruvate kinase family.</text>
</comment>
<keyword id="KW-0067">ATP-binding</keyword>
<keyword id="KW-0324">Glycolysis</keyword>
<keyword id="KW-0418">Kinase</keyword>
<keyword id="KW-0460">Magnesium</keyword>
<keyword id="KW-0479">Metal-binding</keyword>
<keyword id="KW-0547">Nucleotide-binding</keyword>
<keyword id="KW-0630">Potassium</keyword>
<keyword id="KW-0670">Pyruvate</keyword>
<keyword id="KW-1185">Reference proteome</keyword>
<keyword id="KW-0808">Transferase</keyword>
<dbReference type="EC" id="2.7.1.40"/>
<dbReference type="EMBL" id="U03878">
    <property type="protein sequence ID" value="AAA63581.1"/>
    <property type="molecule type" value="mRNA"/>
</dbReference>
<dbReference type="EMBL" id="BC079921">
    <property type="protein sequence ID" value="AAH79921.1"/>
    <property type="molecule type" value="mRNA"/>
</dbReference>
<dbReference type="RefSeq" id="NP_001084341.1">
    <property type="nucleotide sequence ID" value="NM_001090872.1"/>
</dbReference>
<dbReference type="SMR" id="Q92122"/>
<dbReference type="BioGRID" id="100773">
    <property type="interactions" value="2"/>
</dbReference>
<dbReference type="DNASU" id="399448"/>
<dbReference type="GeneID" id="399448"/>
<dbReference type="KEGG" id="xla:399448"/>
<dbReference type="AGR" id="Xenbase:XB-GENE-485877"/>
<dbReference type="CTD" id="399448"/>
<dbReference type="Xenbase" id="XB-GENE-485877">
    <property type="gene designation" value="pkm.S"/>
</dbReference>
<dbReference type="OrthoDB" id="108365at2759"/>
<dbReference type="UniPathway" id="UPA00109">
    <property type="reaction ID" value="UER00188"/>
</dbReference>
<dbReference type="Proteomes" id="UP000186698">
    <property type="component" value="Chromosome 3S"/>
</dbReference>
<dbReference type="Bgee" id="399448">
    <property type="expression patterns" value="Expressed in brain and 19 other cell types or tissues"/>
</dbReference>
<dbReference type="GO" id="GO:0005737">
    <property type="term" value="C:cytoplasm"/>
    <property type="evidence" value="ECO:0000318"/>
    <property type="project" value="GO_Central"/>
</dbReference>
<dbReference type="GO" id="GO:0005524">
    <property type="term" value="F:ATP binding"/>
    <property type="evidence" value="ECO:0007669"/>
    <property type="project" value="UniProtKB-KW"/>
</dbReference>
<dbReference type="GO" id="GO:0016301">
    <property type="term" value="F:kinase activity"/>
    <property type="evidence" value="ECO:0007669"/>
    <property type="project" value="UniProtKB-KW"/>
</dbReference>
<dbReference type="GO" id="GO:0000287">
    <property type="term" value="F:magnesium ion binding"/>
    <property type="evidence" value="ECO:0007669"/>
    <property type="project" value="InterPro"/>
</dbReference>
<dbReference type="GO" id="GO:0030955">
    <property type="term" value="F:potassium ion binding"/>
    <property type="evidence" value="ECO:0007669"/>
    <property type="project" value="InterPro"/>
</dbReference>
<dbReference type="GO" id="GO:0004743">
    <property type="term" value="F:pyruvate kinase activity"/>
    <property type="evidence" value="ECO:0000318"/>
    <property type="project" value="GO_Central"/>
</dbReference>
<dbReference type="GO" id="GO:0032869">
    <property type="term" value="P:cellular response to insulin stimulus"/>
    <property type="evidence" value="ECO:0000318"/>
    <property type="project" value="GO_Central"/>
</dbReference>
<dbReference type="GO" id="GO:0006096">
    <property type="term" value="P:glycolytic process"/>
    <property type="evidence" value="ECO:0000318"/>
    <property type="project" value="GO_Central"/>
</dbReference>
<dbReference type="CDD" id="cd00288">
    <property type="entry name" value="Pyruvate_Kinase"/>
    <property type="match status" value="1"/>
</dbReference>
<dbReference type="FunFam" id="3.20.20.60:FF:000025">
    <property type="entry name" value="Pyruvate kinase"/>
    <property type="match status" value="1"/>
</dbReference>
<dbReference type="FunFam" id="3.40.1380.20:FF:000001">
    <property type="entry name" value="Pyruvate kinase"/>
    <property type="match status" value="1"/>
</dbReference>
<dbReference type="FunFam" id="3.40.1380.20:FF:000002">
    <property type="entry name" value="Pyruvate kinase"/>
    <property type="match status" value="1"/>
</dbReference>
<dbReference type="FunFam" id="2.40.33.10:FF:000023">
    <property type="entry name" value="Pyruvate kinase PKM"/>
    <property type="match status" value="1"/>
</dbReference>
<dbReference type="Gene3D" id="3.20.20.60">
    <property type="entry name" value="Phosphoenolpyruvate-binding domains"/>
    <property type="match status" value="1"/>
</dbReference>
<dbReference type="Gene3D" id="2.40.33.10">
    <property type="entry name" value="PK beta-barrel domain-like"/>
    <property type="match status" value="1"/>
</dbReference>
<dbReference type="Gene3D" id="3.40.1380.20">
    <property type="entry name" value="Pyruvate kinase, C-terminal domain"/>
    <property type="match status" value="2"/>
</dbReference>
<dbReference type="InterPro" id="IPR001697">
    <property type="entry name" value="Pyr_Knase"/>
</dbReference>
<dbReference type="InterPro" id="IPR015813">
    <property type="entry name" value="Pyrv/PenolPyrv_kinase-like_dom"/>
</dbReference>
<dbReference type="InterPro" id="IPR040442">
    <property type="entry name" value="Pyrv_kinase-like_dom_sf"/>
</dbReference>
<dbReference type="InterPro" id="IPR011037">
    <property type="entry name" value="Pyrv_Knase-like_insert_dom_sf"/>
</dbReference>
<dbReference type="InterPro" id="IPR018209">
    <property type="entry name" value="Pyrv_Knase_AS"/>
</dbReference>
<dbReference type="InterPro" id="IPR015793">
    <property type="entry name" value="Pyrv_Knase_brl"/>
</dbReference>
<dbReference type="InterPro" id="IPR015795">
    <property type="entry name" value="Pyrv_Knase_C"/>
</dbReference>
<dbReference type="InterPro" id="IPR036918">
    <property type="entry name" value="Pyrv_Knase_C_sf"/>
</dbReference>
<dbReference type="InterPro" id="IPR015806">
    <property type="entry name" value="Pyrv_Knase_insert_dom_sf"/>
</dbReference>
<dbReference type="NCBIfam" id="NF004491">
    <property type="entry name" value="PRK05826.1"/>
    <property type="match status" value="1"/>
</dbReference>
<dbReference type="NCBIfam" id="NF004978">
    <property type="entry name" value="PRK06354.1"/>
    <property type="match status" value="1"/>
</dbReference>
<dbReference type="NCBIfam" id="TIGR01064">
    <property type="entry name" value="pyruv_kin"/>
    <property type="match status" value="1"/>
</dbReference>
<dbReference type="PANTHER" id="PTHR11817">
    <property type="entry name" value="PYRUVATE KINASE"/>
    <property type="match status" value="1"/>
</dbReference>
<dbReference type="Pfam" id="PF00224">
    <property type="entry name" value="PK"/>
    <property type="match status" value="1"/>
</dbReference>
<dbReference type="Pfam" id="PF02887">
    <property type="entry name" value="PK_C"/>
    <property type="match status" value="1"/>
</dbReference>
<dbReference type="PRINTS" id="PR01050">
    <property type="entry name" value="PYRUVTKNASE"/>
</dbReference>
<dbReference type="SUPFAM" id="SSF51621">
    <property type="entry name" value="Phosphoenolpyruvate/pyruvate domain"/>
    <property type="match status" value="1"/>
</dbReference>
<dbReference type="SUPFAM" id="SSF50800">
    <property type="entry name" value="PK beta-barrel domain-like"/>
    <property type="match status" value="1"/>
</dbReference>
<dbReference type="SUPFAM" id="SSF52935">
    <property type="entry name" value="PK C-terminal domain-like"/>
    <property type="match status" value="1"/>
</dbReference>
<dbReference type="PROSITE" id="PS00110">
    <property type="entry name" value="PYRUVATE_KINASE"/>
    <property type="match status" value="1"/>
</dbReference>
<feature type="chain" id="PRO_0000112098" description="Pyruvate kinase PKM">
    <location>
        <begin position="1"/>
        <end position="527"/>
    </location>
</feature>
<feature type="binding site" evidence="3">
    <location>
        <position position="69"/>
    </location>
    <ligand>
        <name>substrate</name>
    </ligand>
</feature>
<feature type="binding site" evidence="2">
    <location>
        <begin position="71"/>
        <end position="74"/>
    </location>
    <ligand>
        <name>ATP</name>
        <dbReference type="ChEBI" id="CHEBI:30616"/>
    </ligand>
</feature>
<feature type="binding site" evidence="2">
    <location>
        <position position="71"/>
    </location>
    <ligand>
        <name>K(+)</name>
        <dbReference type="ChEBI" id="CHEBI:29103"/>
    </ligand>
</feature>
<feature type="binding site" evidence="2">
    <location>
        <position position="73"/>
    </location>
    <ligand>
        <name>K(+)</name>
        <dbReference type="ChEBI" id="CHEBI:29103"/>
    </ligand>
</feature>
<feature type="binding site" evidence="2">
    <location>
        <position position="109"/>
    </location>
    <ligand>
        <name>K(+)</name>
        <dbReference type="ChEBI" id="CHEBI:29103"/>
    </ligand>
</feature>
<feature type="binding site" evidence="2">
    <location>
        <position position="110"/>
    </location>
    <ligand>
        <name>K(+)</name>
        <dbReference type="ChEBI" id="CHEBI:29103"/>
    </ligand>
</feature>
<feature type="binding site" evidence="2">
    <location>
        <position position="116"/>
    </location>
    <ligand>
        <name>ATP</name>
        <dbReference type="ChEBI" id="CHEBI:30616"/>
    </ligand>
</feature>
<feature type="binding site" evidence="2">
    <location>
        <position position="203"/>
    </location>
    <ligand>
        <name>ATP</name>
        <dbReference type="ChEBI" id="CHEBI:30616"/>
    </ligand>
</feature>
<feature type="binding site" evidence="3">
    <location>
        <position position="266"/>
    </location>
    <ligand>
        <name>substrate</name>
    </ligand>
</feature>
<feature type="binding site" evidence="2">
    <location>
        <position position="268"/>
    </location>
    <ligand>
        <name>Mg(2+)</name>
        <dbReference type="ChEBI" id="CHEBI:18420"/>
    </ligand>
</feature>
<feature type="binding site" evidence="3">
    <location>
        <position position="291"/>
    </location>
    <ligand>
        <name>substrate</name>
    </ligand>
</feature>
<feature type="binding site" evidence="2">
    <location>
        <position position="292"/>
    </location>
    <ligand>
        <name>Mg(2+)</name>
        <dbReference type="ChEBI" id="CHEBI:18420"/>
    </ligand>
</feature>
<feature type="binding site" evidence="3">
    <location>
        <position position="292"/>
    </location>
    <ligand>
        <name>substrate</name>
    </ligand>
</feature>
<feature type="binding site" evidence="3">
    <location>
        <position position="324"/>
    </location>
    <ligand>
        <name>substrate</name>
    </ligand>
</feature>
<feature type="binding site" evidence="2">
    <location>
        <begin position="428"/>
        <end position="433"/>
    </location>
    <ligand>
        <name>beta-D-fructose 1,6-bisphosphate</name>
        <dbReference type="ChEBI" id="CHEBI:32966"/>
        <note>allosteric activator</note>
    </ligand>
</feature>
<feature type="binding site" evidence="2">
    <location>
        <position position="478"/>
    </location>
    <ligand>
        <name>beta-D-fructose 1,6-bisphosphate</name>
        <dbReference type="ChEBI" id="CHEBI:32966"/>
        <note>allosteric activator</note>
    </ligand>
</feature>
<feature type="binding site" evidence="2">
    <location>
        <position position="485"/>
    </location>
    <ligand>
        <name>beta-D-fructose 1,6-bisphosphate</name>
        <dbReference type="ChEBI" id="CHEBI:32966"/>
        <note>allosteric activator</note>
    </ligand>
</feature>
<feature type="binding site" evidence="2">
    <location>
        <begin position="512"/>
        <end position="517"/>
    </location>
    <ligand>
        <name>beta-D-fructose 1,6-bisphosphate</name>
        <dbReference type="ChEBI" id="CHEBI:32966"/>
        <note>allosteric activator</note>
    </ligand>
</feature>
<feature type="site" description="Transition state stabilizer" evidence="1">
    <location>
        <position position="266"/>
    </location>
</feature>
<protein>
    <recommendedName>
        <fullName>Pyruvate kinase PKM</fullName>
        <ecNumber>2.7.1.40</ecNumber>
    </recommendedName>
    <alternativeName>
        <fullName>Cytosolic thyroid hormone-binding protein</fullName>
        <shortName>CTHBP</shortName>
    </alternativeName>
</protein>